<keyword id="KW-0963">Cytoplasm</keyword>
<keyword id="KW-0206">Cytoskeleton</keyword>
<keyword id="KW-0342">GTP-binding</keyword>
<keyword id="KW-1017">Isopeptide bond</keyword>
<keyword id="KW-0460">Magnesium</keyword>
<keyword id="KW-0479">Metal-binding</keyword>
<keyword id="KW-0493">Microtubule</keyword>
<keyword id="KW-0547">Nucleotide-binding</keyword>
<keyword id="KW-1185">Reference proteome</keyword>
<comment type="function">
    <text>Tubulin is the major constituent of microtubules, a cylinder consisting of laterally associated linear protofilaments composed of alpha- and beta-tubulin heterodimers. Microtubules grow by the addition of GTP-tubulin dimers to the microtubule end, where a stabilizing cap forms. Below the cap, tubulin dimers are in GDP-bound state, owing to GTPase activity of alpha-tubulin.</text>
</comment>
<comment type="cofactor">
    <cofactor evidence="4">
        <name>Mg(2+)</name>
        <dbReference type="ChEBI" id="CHEBI:18420"/>
    </cofactor>
</comment>
<comment type="subunit">
    <text>Dimer of alpha and beta chains. A typical microtubule is a hollow water-filled tube with an outer diameter of 25 nm and an inner diameter of 15 nM. Alpha-beta heterodimers associate head-to-tail to form protofilaments running lengthwise along the microtubule wall with the beta-tubulin subunit facing the microtubule plus end conferring a structural polarity. Microtubules usually have 13 protofilaments but different protofilament numbers can be found in some organisms and specialized cells.</text>
</comment>
<comment type="subcellular location">
    <subcellularLocation>
        <location evidence="1">Cytoplasm</location>
        <location evidence="1">Cytoskeleton</location>
    </subcellularLocation>
</comment>
<comment type="domain">
    <text evidence="3">The MREI motif is common among all beta-tubulin isoforms and may be critical for tubulin autoregulation.</text>
</comment>
<comment type="PTM">
    <text evidence="2">Some glutamate residues at the C-terminus are polyglycylated, resulting in polyglycine chains on the gamma-carboxyl group. Glycylation is mainly limited to tubulin incorporated into axonemes (cilia and flagella) whereas glutamylation is prevalent in neuronal cells, centrioles, axonemes, and the mitotic spindle. Both modifications can coexist on the same protein on adjacent residues, and lowering polyglycylation levels increases polyglutamylation, and reciprocally. The precise function of polyglycylation is still unclear.</text>
</comment>
<comment type="PTM">
    <text evidence="2 7">Some glutamate residues at the C-terminus are polyglutamylated, resulting in polyglutamate chains on the gamma-carboxyl group (By similarity). Polyglutamylation plays a key role in microtubule severing by spastin (SPAST). SPAST preferentially recognizes and acts on microtubules decorated with short polyglutamate tails: severing activity by SPAST increases as the number of glutamates per tubulin rises from one to eight, but decreases beyond this glutamylation threshold (By similarity).</text>
</comment>
<comment type="similarity">
    <text evidence="9">Belongs to the tubulin family.</text>
</comment>
<reference key="1">
    <citation type="submission" date="1994-10" db="EMBL/GenBank/DDBJ databases">
        <title>Characterization of a novel beta5-tubulin during Xenopus laevis development.</title>
        <authorList>
            <person name="Tay J."/>
            <person name="Danielsen M."/>
        </authorList>
    </citation>
    <scope>NUCLEOTIDE SEQUENCE [MRNA]</scope>
    <source>
        <tissue>Tadpole</tissue>
    </source>
</reference>
<reference key="2">
    <citation type="submission" date="2003-03" db="EMBL/GenBank/DDBJ databases">
        <authorList>
            <consortium name="NIH - Xenopus Gene Collection (XGC) project"/>
        </authorList>
    </citation>
    <scope>NUCLEOTIDE SEQUENCE [LARGE SCALE MRNA]</scope>
    <source>
        <tissue>Embryo</tissue>
    </source>
</reference>
<organism>
    <name type="scientific">Xenopus laevis</name>
    <name type="common">African clawed frog</name>
    <dbReference type="NCBI Taxonomy" id="8355"/>
    <lineage>
        <taxon>Eukaryota</taxon>
        <taxon>Metazoa</taxon>
        <taxon>Chordata</taxon>
        <taxon>Craniata</taxon>
        <taxon>Vertebrata</taxon>
        <taxon>Euteleostomi</taxon>
        <taxon>Amphibia</taxon>
        <taxon>Batrachia</taxon>
        <taxon>Anura</taxon>
        <taxon>Pipoidea</taxon>
        <taxon>Pipidae</taxon>
        <taxon>Xenopodinae</taxon>
        <taxon>Xenopus</taxon>
        <taxon>Xenopus</taxon>
    </lineage>
</organism>
<dbReference type="EMBL" id="U15444">
    <property type="protein sequence ID" value="AAA56751.1"/>
    <property type="molecule type" value="mRNA"/>
</dbReference>
<dbReference type="EMBL" id="BC049004">
    <property type="protein sequence ID" value="AAH49004.1"/>
    <property type="molecule type" value="mRNA"/>
</dbReference>
<dbReference type="RefSeq" id="NP_001080726.1">
    <property type="nucleotide sequence ID" value="NM_001087257.1"/>
</dbReference>
<dbReference type="SMR" id="Q91575"/>
<dbReference type="BioGRID" id="98660">
    <property type="interactions" value="2"/>
</dbReference>
<dbReference type="IntAct" id="Q91575">
    <property type="interactions" value="2"/>
</dbReference>
<dbReference type="DNASU" id="380418"/>
<dbReference type="GeneID" id="108700239"/>
<dbReference type="GeneID" id="380418"/>
<dbReference type="KEGG" id="xla:108700239"/>
<dbReference type="KEGG" id="xla:380418"/>
<dbReference type="AGR" id="Xenbase:XB-GENE-864839"/>
<dbReference type="CTD" id="108700239"/>
<dbReference type="CTD" id="380418"/>
<dbReference type="Xenbase" id="XB-GENE-864839">
    <property type="gene designation" value="tubb.L"/>
</dbReference>
<dbReference type="OMA" id="MANTTKY"/>
<dbReference type="OrthoDB" id="1662883at2759"/>
<dbReference type="Proteomes" id="UP000186698">
    <property type="component" value="Chromosome 8L"/>
</dbReference>
<dbReference type="Proteomes" id="UP000186698">
    <property type="component" value="Chromosome 8S"/>
</dbReference>
<dbReference type="Bgee" id="108700239">
    <property type="expression patterns" value="Expressed in brain and 19 other cell types or tissues"/>
</dbReference>
<dbReference type="GO" id="GO:0005737">
    <property type="term" value="C:cytoplasm"/>
    <property type="evidence" value="ECO:0000318"/>
    <property type="project" value="GO_Central"/>
</dbReference>
<dbReference type="GO" id="GO:0005874">
    <property type="term" value="C:microtubule"/>
    <property type="evidence" value="ECO:0000318"/>
    <property type="project" value="GO_Central"/>
</dbReference>
<dbReference type="GO" id="GO:0005525">
    <property type="term" value="F:GTP binding"/>
    <property type="evidence" value="ECO:0000318"/>
    <property type="project" value="GO_Central"/>
</dbReference>
<dbReference type="GO" id="GO:0003924">
    <property type="term" value="F:GTPase activity"/>
    <property type="evidence" value="ECO:0007669"/>
    <property type="project" value="InterPro"/>
</dbReference>
<dbReference type="GO" id="GO:0046872">
    <property type="term" value="F:metal ion binding"/>
    <property type="evidence" value="ECO:0007669"/>
    <property type="project" value="UniProtKB-KW"/>
</dbReference>
<dbReference type="GO" id="GO:0005200">
    <property type="term" value="F:structural constituent of cytoskeleton"/>
    <property type="evidence" value="ECO:0000318"/>
    <property type="project" value="GO_Central"/>
</dbReference>
<dbReference type="GO" id="GO:0000226">
    <property type="term" value="P:microtubule cytoskeleton organization"/>
    <property type="evidence" value="ECO:0000318"/>
    <property type="project" value="GO_Central"/>
</dbReference>
<dbReference type="GO" id="GO:0000278">
    <property type="term" value="P:mitotic cell cycle"/>
    <property type="evidence" value="ECO:0000318"/>
    <property type="project" value="GO_Central"/>
</dbReference>
<dbReference type="CDD" id="cd02187">
    <property type="entry name" value="beta_tubulin"/>
    <property type="match status" value="1"/>
</dbReference>
<dbReference type="FunFam" id="1.10.287.600:FF:000002">
    <property type="entry name" value="Tubulin beta chain"/>
    <property type="match status" value="1"/>
</dbReference>
<dbReference type="FunFam" id="3.30.1330.20:FF:000002">
    <property type="entry name" value="Tubulin beta chain"/>
    <property type="match status" value="1"/>
</dbReference>
<dbReference type="FunFam" id="3.40.50.1440:FF:000003">
    <property type="entry name" value="Tubulin beta chain"/>
    <property type="match status" value="1"/>
</dbReference>
<dbReference type="Gene3D" id="1.10.287.600">
    <property type="entry name" value="Helix hairpin bin"/>
    <property type="match status" value="1"/>
</dbReference>
<dbReference type="Gene3D" id="3.30.1330.20">
    <property type="entry name" value="Tubulin/FtsZ, C-terminal domain"/>
    <property type="match status" value="1"/>
</dbReference>
<dbReference type="Gene3D" id="3.40.50.1440">
    <property type="entry name" value="Tubulin/FtsZ, GTPase domain"/>
    <property type="match status" value="1"/>
</dbReference>
<dbReference type="InterPro" id="IPR013838">
    <property type="entry name" value="Beta-tubulin_BS"/>
</dbReference>
<dbReference type="InterPro" id="IPR002453">
    <property type="entry name" value="Beta_tubulin"/>
</dbReference>
<dbReference type="InterPro" id="IPR008280">
    <property type="entry name" value="Tub_FtsZ_C"/>
</dbReference>
<dbReference type="InterPro" id="IPR000217">
    <property type="entry name" value="Tubulin"/>
</dbReference>
<dbReference type="InterPro" id="IPR037103">
    <property type="entry name" value="Tubulin/FtsZ-like_C"/>
</dbReference>
<dbReference type="InterPro" id="IPR018316">
    <property type="entry name" value="Tubulin/FtsZ_2-layer-sand-dom"/>
</dbReference>
<dbReference type="InterPro" id="IPR036525">
    <property type="entry name" value="Tubulin/FtsZ_GTPase_sf"/>
</dbReference>
<dbReference type="InterPro" id="IPR023123">
    <property type="entry name" value="Tubulin_C"/>
</dbReference>
<dbReference type="InterPro" id="IPR017975">
    <property type="entry name" value="Tubulin_CS"/>
</dbReference>
<dbReference type="InterPro" id="IPR003008">
    <property type="entry name" value="Tubulin_FtsZ_GTPase"/>
</dbReference>
<dbReference type="PANTHER" id="PTHR11588">
    <property type="entry name" value="TUBULIN"/>
    <property type="match status" value="1"/>
</dbReference>
<dbReference type="Pfam" id="PF00091">
    <property type="entry name" value="Tubulin"/>
    <property type="match status" value="1"/>
</dbReference>
<dbReference type="Pfam" id="PF03953">
    <property type="entry name" value="Tubulin_C"/>
    <property type="match status" value="1"/>
</dbReference>
<dbReference type="PRINTS" id="PR01163">
    <property type="entry name" value="BETATUBULIN"/>
</dbReference>
<dbReference type="PRINTS" id="PR01161">
    <property type="entry name" value="TUBULIN"/>
</dbReference>
<dbReference type="SMART" id="SM00864">
    <property type="entry name" value="Tubulin"/>
    <property type="match status" value="1"/>
</dbReference>
<dbReference type="SMART" id="SM00865">
    <property type="entry name" value="Tubulin_C"/>
    <property type="match status" value="1"/>
</dbReference>
<dbReference type="SUPFAM" id="SSF55307">
    <property type="entry name" value="Tubulin C-terminal domain-like"/>
    <property type="match status" value="1"/>
</dbReference>
<dbReference type="SUPFAM" id="SSF52490">
    <property type="entry name" value="Tubulin nucleotide-binding domain-like"/>
    <property type="match status" value="1"/>
</dbReference>
<dbReference type="PROSITE" id="PS00227">
    <property type="entry name" value="TUBULIN"/>
    <property type="match status" value="1"/>
</dbReference>
<dbReference type="PROSITE" id="PS00228">
    <property type="entry name" value="TUBULIN_B_AUTOREG"/>
    <property type="match status" value="1"/>
</dbReference>
<proteinExistence type="evidence at transcript level"/>
<sequence length="444" mass="49728">MREIVHIQAGQCGNQIGAKFWEVISDEHGIDPTGTYHGDSDLQLDRISVYYNEATGGKYVPRAILVDLEPGTMDSVRSGPFGQIFRPDNFVFGQSGAGNNWAKGHYTEGAELVDSVLDVVRKEAESCDCLQGFQLTHSLGGGTGSGMGTLLISKIREEYPDRIMNTFSVVPSPKVSDTVVEPYNATLSVHQLVENTDETYCIDNEALYDICFRTLKLTTPTYGDLNHLVSATMSGVTTCLRFPGQLNADLRKLAVNMVPFPRLHFFMPGFAPLTSRGSQQYRALTVPELTQQVFDAKNMMAACDPRHGRYLTVAAVFRGRMSMKEVDEQMLNVQNKNSSYFVEWIPNNVKTAVCDIPPRGLKMAVTFIGNSTAIQELFKRISEQFTAMFRRKAFLHWYTGEGMDEMEFTEAESNMNDLVSEYQQYQDATAEEEEDFNEEAEEEA</sequence>
<gene>
    <name type="primary">tubb</name>
    <name type="synonym">tubb5</name>
</gene>
<evidence type="ECO:0000250" key="1"/>
<evidence type="ECO:0000250" key="2">
    <source>
        <dbReference type="UniProtKB" id="A2AQ07"/>
    </source>
</evidence>
<evidence type="ECO:0000250" key="3">
    <source>
        <dbReference type="UniProtKB" id="P07437"/>
    </source>
</evidence>
<evidence type="ECO:0000250" key="4">
    <source>
        <dbReference type="UniProtKB" id="P68363"/>
    </source>
</evidence>
<evidence type="ECO:0000250" key="5">
    <source>
        <dbReference type="UniProtKB" id="Q13509"/>
    </source>
</evidence>
<evidence type="ECO:0000250" key="6">
    <source>
        <dbReference type="UniProtKB" id="Q2T9S0"/>
    </source>
</evidence>
<evidence type="ECO:0000250" key="7">
    <source>
        <dbReference type="UniProtKB" id="Q71U36"/>
    </source>
</evidence>
<evidence type="ECO:0000256" key="8">
    <source>
        <dbReference type="SAM" id="MobiDB-lite"/>
    </source>
</evidence>
<evidence type="ECO:0000305" key="9"/>
<accession>Q91575</accession>
<protein>
    <recommendedName>
        <fullName>Tubulin beta chain</fullName>
    </recommendedName>
    <alternativeName>
        <fullName>Tubulin beta-5 chain</fullName>
    </alternativeName>
</protein>
<feature type="chain" id="PRO_0000297531" description="Tubulin beta chain">
    <location>
        <begin position="1"/>
        <end position="444"/>
    </location>
</feature>
<feature type="region of interest" description="Disordered" evidence="8">
    <location>
        <begin position="421"/>
        <end position="444"/>
    </location>
</feature>
<feature type="short sequence motif" description="MREI motif" evidence="3">
    <location>
        <begin position="1"/>
        <end position="4"/>
    </location>
</feature>
<feature type="compositionally biased region" description="Acidic residues" evidence="8">
    <location>
        <begin position="429"/>
        <end position="444"/>
    </location>
</feature>
<feature type="binding site" evidence="5">
    <location>
        <position position="11"/>
    </location>
    <ligand>
        <name>GTP</name>
        <dbReference type="ChEBI" id="CHEBI:37565"/>
    </ligand>
</feature>
<feature type="binding site" evidence="4">
    <location>
        <position position="69"/>
    </location>
    <ligand>
        <name>GTP</name>
        <dbReference type="ChEBI" id="CHEBI:37565"/>
    </ligand>
</feature>
<feature type="binding site" evidence="4">
    <location>
        <position position="69"/>
    </location>
    <ligand>
        <name>Mg(2+)</name>
        <dbReference type="ChEBI" id="CHEBI:18420"/>
    </ligand>
</feature>
<feature type="binding site" evidence="5">
    <location>
        <position position="138"/>
    </location>
    <ligand>
        <name>GTP</name>
        <dbReference type="ChEBI" id="CHEBI:37565"/>
    </ligand>
</feature>
<feature type="binding site" evidence="5">
    <location>
        <position position="142"/>
    </location>
    <ligand>
        <name>GTP</name>
        <dbReference type="ChEBI" id="CHEBI:37565"/>
    </ligand>
</feature>
<feature type="binding site" evidence="5">
    <location>
        <position position="143"/>
    </location>
    <ligand>
        <name>GTP</name>
        <dbReference type="ChEBI" id="CHEBI:37565"/>
    </ligand>
</feature>
<feature type="binding site" evidence="5">
    <location>
        <position position="144"/>
    </location>
    <ligand>
        <name>GTP</name>
        <dbReference type="ChEBI" id="CHEBI:37565"/>
    </ligand>
</feature>
<feature type="binding site" evidence="5">
    <location>
        <position position="204"/>
    </location>
    <ligand>
        <name>GTP</name>
        <dbReference type="ChEBI" id="CHEBI:37565"/>
    </ligand>
</feature>
<feature type="binding site" evidence="5">
    <location>
        <position position="226"/>
    </location>
    <ligand>
        <name>GTP</name>
        <dbReference type="ChEBI" id="CHEBI:37565"/>
    </ligand>
</feature>
<feature type="modified residue" description="5-glutamyl polyglutamate" evidence="6">
    <location>
        <position position="438"/>
    </location>
</feature>
<name>TBB5_XENLA</name>